<gene>
    <name evidence="1" type="primary">rpmI</name>
    <name type="ordered locus">Shew185_2220</name>
</gene>
<comment type="similarity">
    <text evidence="1">Belongs to the bacterial ribosomal protein bL35 family.</text>
</comment>
<feature type="chain" id="PRO_1000050762" description="Large ribosomal subunit protein bL35">
    <location>
        <begin position="1"/>
        <end position="64"/>
    </location>
</feature>
<reference key="1">
    <citation type="submission" date="2007-07" db="EMBL/GenBank/DDBJ databases">
        <title>Complete sequence of chromosome of Shewanella baltica OS185.</title>
        <authorList>
            <consortium name="US DOE Joint Genome Institute"/>
            <person name="Copeland A."/>
            <person name="Lucas S."/>
            <person name="Lapidus A."/>
            <person name="Barry K."/>
            <person name="Glavina del Rio T."/>
            <person name="Dalin E."/>
            <person name="Tice H."/>
            <person name="Pitluck S."/>
            <person name="Sims D."/>
            <person name="Brettin T."/>
            <person name="Bruce D."/>
            <person name="Detter J.C."/>
            <person name="Han C."/>
            <person name="Schmutz J."/>
            <person name="Larimer F."/>
            <person name="Land M."/>
            <person name="Hauser L."/>
            <person name="Kyrpides N."/>
            <person name="Mikhailova N."/>
            <person name="Brettar I."/>
            <person name="Rodrigues J."/>
            <person name="Konstantinidis K."/>
            <person name="Tiedje J."/>
            <person name="Richardson P."/>
        </authorList>
    </citation>
    <scope>NUCLEOTIDE SEQUENCE [LARGE SCALE GENOMIC DNA]</scope>
    <source>
        <strain>OS185</strain>
    </source>
</reference>
<keyword id="KW-0687">Ribonucleoprotein</keyword>
<keyword id="KW-0689">Ribosomal protein</keyword>
<name>RL35_SHEB8</name>
<accession>A6WNH0</accession>
<dbReference type="EMBL" id="CP000753">
    <property type="protein sequence ID" value="ABS08359.1"/>
    <property type="molecule type" value="Genomic_DNA"/>
</dbReference>
<dbReference type="RefSeq" id="WP_006081653.1">
    <property type="nucleotide sequence ID" value="NC_009665.1"/>
</dbReference>
<dbReference type="SMR" id="A6WNH0"/>
<dbReference type="GeneID" id="11772455"/>
<dbReference type="KEGG" id="sbm:Shew185_2220"/>
<dbReference type="HOGENOM" id="CLU_169643_1_1_6"/>
<dbReference type="GO" id="GO:0022625">
    <property type="term" value="C:cytosolic large ribosomal subunit"/>
    <property type="evidence" value="ECO:0007669"/>
    <property type="project" value="TreeGrafter"/>
</dbReference>
<dbReference type="GO" id="GO:0003735">
    <property type="term" value="F:structural constituent of ribosome"/>
    <property type="evidence" value="ECO:0007669"/>
    <property type="project" value="InterPro"/>
</dbReference>
<dbReference type="GO" id="GO:0006412">
    <property type="term" value="P:translation"/>
    <property type="evidence" value="ECO:0007669"/>
    <property type="project" value="UniProtKB-UniRule"/>
</dbReference>
<dbReference type="FunFam" id="4.10.410.60:FF:000001">
    <property type="entry name" value="50S ribosomal protein L35"/>
    <property type="match status" value="1"/>
</dbReference>
<dbReference type="Gene3D" id="4.10.410.60">
    <property type="match status" value="1"/>
</dbReference>
<dbReference type="HAMAP" id="MF_00514">
    <property type="entry name" value="Ribosomal_bL35"/>
    <property type="match status" value="1"/>
</dbReference>
<dbReference type="InterPro" id="IPR001706">
    <property type="entry name" value="Ribosomal_bL35"/>
</dbReference>
<dbReference type="InterPro" id="IPR021137">
    <property type="entry name" value="Ribosomal_bL35-like"/>
</dbReference>
<dbReference type="InterPro" id="IPR018265">
    <property type="entry name" value="Ribosomal_bL35_CS"/>
</dbReference>
<dbReference type="InterPro" id="IPR037229">
    <property type="entry name" value="Ribosomal_bL35_sf"/>
</dbReference>
<dbReference type="NCBIfam" id="TIGR00001">
    <property type="entry name" value="rpmI_bact"/>
    <property type="match status" value="1"/>
</dbReference>
<dbReference type="PANTHER" id="PTHR33343">
    <property type="entry name" value="54S RIBOSOMAL PROTEIN BL35M"/>
    <property type="match status" value="1"/>
</dbReference>
<dbReference type="PANTHER" id="PTHR33343:SF1">
    <property type="entry name" value="LARGE RIBOSOMAL SUBUNIT PROTEIN BL35M"/>
    <property type="match status" value="1"/>
</dbReference>
<dbReference type="Pfam" id="PF01632">
    <property type="entry name" value="Ribosomal_L35p"/>
    <property type="match status" value="1"/>
</dbReference>
<dbReference type="PRINTS" id="PR00064">
    <property type="entry name" value="RIBOSOMALL35"/>
</dbReference>
<dbReference type="SUPFAM" id="SSF143034">
    <property type="entry name" value="L35p-like"/>
    <property type="match status" value="1"/>
</dbReference>
<dbReference type="PROSITE" id="PS00936">
    <property type="entry name" value="RIBOSOMAL_L35"/>
    <property type="match status" value="1"/>
</dbReference>
<sequence>MPKMKTDKGVAKRFKKTANGFKRKQAHLRHILTKKSTKRKRHLRAKCLVSKADVPAIARQLPYA</sequence>
<evidence type="ECO:0000255" key="1">
    <source>
        <dbReference type="HAMAP-Rule" id="MF_00514"/>
    </source>
</evidence>
<evidence type="ECO:0000305" key="2"/>
<proteinExistence type="inferred from homology"/>
<protein>
    <recommendedName>
        <fullName evidence="1">Large ribosomal subunit protein bL35</fullName>
    </recommendedName>
    <alternativeName>
        <fullName evidence="2">50S ribosomal protein L35</fullName>
    </alternativeName>
</protein>
<organism>
    <name type="scientific">Shewanella baltica (strain OS185)</name>
    <dbReference type="NCBI Taxonomy" id="402882"/>
    <lineage>
        <taxon>Bacteria</taxon>
        <taxon>Pseudomonadati</taxon>
        <taxon>Pseudomonadota</taxon>
        <taxon>Gammaproteobacteria</taxon>
        <taxon>Alteromonadales</taxon>
        <taxon>Shewanellaceae</taxon>
        <taxon>Shewanella</taxon>
    </lineage>
</organism>